<accession>Q6EVZ9</accession>
<feature type="initiator methionine" description="Removed" evidence="1">
    <location>
        <position position="1"/>
    </location>
</feature>
<feature type="chain" id="PRO_0000061991" description="Photosystem I iron-sulfur center">
    <location>
        <begin position="2"/>
        <end position="81"/>
    </location>
</feature>
<feature type="domain" description="4Fe-4S ferredoxin-type 1" evidence="2">
    <location>
        <begin position="2"/>
        <end position="31"/>
    </location>
</feature>
<feature type="domain" description="4Fe-4S ferredoxin-type 2" evidence="2">
    <location>
        <begin position="39"/>
        <end position="68"/>
    </location>
</feature>
<feature type="binding site" evidence="2">
    <location>
        <position position="11"/>
    </location>
    <ligand>
        <name>[4Fe-4S] cluster</name>
        <dbReference type="ChEBI" id="CHEBI:49883"/>
        <label>1</label>
    </ligand>
</feature>
<feature type="binding site" evidence="2">
    <location>
        <position position="14"/>
    </location>
    <ligand>
        <name>[4Fe-4S] cluster</name>
        <dbReference type="ChEBI" id="CHEBI:49883"/>
        <label>1</label>
    </ligand>
</feature>
<feature type="binding site" evidence="2">
    <location>
        <position position="17"/>
    </location>
    <ligand>
        <name>[4Fe-4S] cluster</name>
        <dbReference type="ChEBI" id="CHEBI:49883"/>
        <label>1</label>
    </ligand>
</feature>
<feature type="binding site" evidence="2">
    <location>
        <position position="21"/>
    </location>
    <ligand>
        <name>[4Fe-4S] cluster</name>
        <dbReference type="ChEBI" id="CHEBI:49883"/>
        <label>2</label>
    </ligand>
</feature>
<feature type="binding site" evidence="2">
    <location>
        <position position="48"/>
    </location>
    <ligand>
        <name>[4Fe-4S] cluster</name>
        <dbReference type="ChEBI" id="CHEBI:49883"/>
        <label>2</label>
    </ligand>
</feature>
<feature type="binding site" evidence="2">
    <location>
        <position position="51"/>
    </location>
    <ligand>
        <name>[4Fe-4S] cluster</name>
        <dbReference type="ChEBI" id="CHEBI:49883"/>
        <label>2</label>
    </ligand>
</feature>
<feature type="binding site" evidence="2">
    <location>
        <position position="54"/>
    </location>
    <ligand>
        <name>[4Fe-4S] cluster</name>
        <dbReference type="ChEBI" id="CHEBI:49883"/>
        <label>2</label>
    </ligand>
</feature>
<feature type="binding site" evidence="2">
    <location>
        <position position="58"/>
    </location>
    <ligand>
        <name>[4Fe-4S] cluster</name>
        <dbReference type="ChEBI" id="CHEBI:49883"/>
        <label>1</label>
    </ligand>
</feature>
<gene>
    <name evidence="2" type="primary">psaC</name>
</gene>
<dbReference type="EC" id="1.97.1.12" evidence="2"/>
<dbReference type="EMBL" id="AJ627251">
    <property type="protein sequence ID" value="CAF28647.1"/>
    <property type="molecule type" value="Genomic_DNA"/>
</dbReference>
<dbReference type="RefSeq" id="YP_053207.1">
    <property type="nucleotide sequence ID" value="NC_006050.1"/>
</dbReference>
<dbReference type="SMR" id="Q6EVZ9"/>
<dbReference type="GeneID" id="2896237"/>
<dbReference type="GO" id="GO:0009535">
    <property type="term" value="C:chloroplast thylakoid membrane"/>
    <property type="evidence" value="ECO:0007669"/>
    <property type="project" value="UniProtKB-SubCell"/>
</dbReference>
<dbReference type="GO" id="GO:0009522">
    <property type="term" value="C:photosystem I"/>
    <property type="evidence" value="ECO:0007669"/>
    <property type="project" value="UniProtKB-KW"/>
</dbReference>
<dbReference type="GO" id="GO:0051539">
    <property type="term" value="F:4 iron, 4 sulfur cluster binding"/>
    <property type="evidence" value="ECO:0007669"/>
    <property type="project" value="UniProtKB-KW"/>
</dbReference>
<dbReference type="GO" id="GO:0009055">
    <property type="term" value="F:electron transfer activity"/>
    <property type="evidence" value="ECO:0007669"/>
    <property type="project" value="UniProtKB-UniRule"/>
</dbReference>
<dbReference type="GO" id="GO:0046872">
    <property type="term" value="F:metal ion binding"/>
    <property type="evidence" value="ECO:0007669"/>
    <property type="project" value="UniProtKB-KW"/>
</dbReference>
<dbReference type="GO" id="GO:0016491">
    <property type="term" value="F:oxidoreductase activity"/>
    <property type="evidence" value="ECO:0007669"/>
    <property type="project" value="UniProtKB-KW"/>
</dbReference>
<dbReference type="GO" id="GO:0009773">
    <property type="term" value="P:photosynthetic electron transport in photosystem I"/>
    <property type="evidence" value="ECO:0007669"/>
    <property type="project" value="InterPro"/>
</dbReference>
<dbReference type="FunFam" id="3.30.70.20:FF:000001">
    <property type="entry name" value="Photosystem I iron-sulfur center"/>
    <property type="match status" value="1"/>
</dbReference>
<dbReference type="Gene3D" id="3.30.70.20">
    <property type="match status" value="1"/>
</dbReference>
<dbReference type="HAMAP" id="MF_01303">
    <property type="entry name" value="PSI_PsaC"/>
    <property type="match status" value="1"/>
</dbReference>
<dbReference type="InterPro" id="IPR017896">
    <property type="entry name" value="4Fe4S_Fe-S-bd"/>
</dbReference>
<dbReference type="InterPro" id="IPR017900">
    <property type="entry name" value="4Fe4S_Fe_S_CS"/>
</dbReference>
<dbReference type="InterPro" id="IPR050157">
    <property type="entry name" value="PSI_iron-sulfur_center"/>
</dbReference>
<dbReference type="InterPro" id="IPR017491">
    <property type="entry name" value="PSI_PsaC"/>
</dbReference>
<dbReference type="NCBIfam" id="TIGR03048">
    <property type="entry name" value="PS_I_psaC"/>
    <property type="match status" value="1"/>
</dbReference>
<dbReference type="PANTHER" id="PTHR24960:SF79">
    <property type="entry name" value="PHOTOSYSTEM I IRON-SULFUR CENTER"/>
    <property type="match status" value="1"/>
</dbReference>
<dbReference type="PANTHER" id="PTHR24960">
    <property type="entry name" value="PHOTOSYSTEM I IRON-SULFUR CENTER-RELATED"/>
    <property type="match status" value="1"/>
</dbReference>
<dbReference type="Pfam" id="PF14697">
    <property type="entry name" value="Fer4_21"/>
    <property type="match status" value="1"/>
</dbReference>
<dbReference type="SUPFAM" id="SSF54862">
    <property type="entry name" value="4Fe-4S ferredoxins"/>
    <property type="match status" value="1"/>
</dbReference>
<dbReference type="PROSITE" id="PS00198">
    <property type="entry name" value="4FE4S_FER_1"/>
    <property type="match status" value="2"/>
</dbReference>
<dbReference type="PROSITE" id="PS51379">
    <property type="entry name" value="4FE4S_FER_2"/>
    <property type="match status" value="2"/>
</dbReference>
<comment type="function">
    <text evidence="2">Apoprotein for the two 4Fe-4S centers FA and FB of photosystem I (PSI); essential for photochemical activity. FB is the terminal electron acceptor of PSI, donating electrons to ferredoxin. The C-terminus interacts with PsaA/B/D and helps assemble the protein into the PSI complex. Required for binding of PsaD and PsaE to PSI. PSI is a plastocyanin-ferredoxin oxidoreductase, converting photonic excitation into a charge separation, which transfers an electron from the donor P700 chlorophyll pair to the spectroscopically characterized acceptors A0, A1, FX, FA and FB in turn.</text>
</comment>
<comment type="catalytic activity">
    <reaction evidence="2">
        <text>reduced [plastocyanin] + hnu + oxidized [2Fe-2S]-[ferredoxin] = oxidized [plastocyanin] + reduced [2Fe-2S]-[ferredoxin]</text>
        <dbReference type="Rhea" id="RHEA:30407"/>
        <dbReference type="Rhea" id="RHEA-COMP:10000"/>
        <dbReference type="Rhea" id="RHEA-COMP:10001"/>
        <dbReference type="Rhea" id="RHEA-COMP:10039"/>
        <dbReference type="Rhea" id="RHEA-COMP:10040"/>
        <dbReference type="ChEBI" id="CHEBI:29036"/>
        <dbReference type="ChEBI" id="CHEBI:30212"/>
        <dbReference type="ChEBI" id="CHEBI:33737"/>
        <dbReference type="ChEBI" id="CHEBI:33738"/>
        <dbReference type="ChEBI" id="CHEBI:49552"/>
        <dbReference type="EC" id="1.97.1.12"/>
    </reaction>
</comment>
<comment type="cofactor">
    <cofactor evidence="2">
        <name>[4Fe-4S] cluster</name>
        <dbReference type="ChEBI" id="CHEBI:49883"/>
    </cofactor>
    <text evidence="2">Binds 2 [4Fe-4S] clusters. Cluster 2 is most probably the spectroscopically characterized electron acceptor FA and cluster 1 is most probably FB.</text>
</comment>
<comment type="subunit">
    <text evidence="2">The eukaryotic PSI reaction center is composed of at least 11 subunits.</text>
</comment>
<comment type="subcellular location">
    <subcellularLocation>
        <location evidence="2">Plastid</location>
        <location evidence="2">Chloroplast thylakoid membrane</location>
        <topology evidence="2">Peripheral membrane protein</topology>
        <orientation evidence="2">Stromal side</orientation>
    </subcellularLocation>
</comment>
<sequence>MSHSVKIYDTCIGCTQCVRACPTDVLEMIPWDGCKAKQIASAPRTEDCVGCKRCESACPTDFLSVRVYLWHETTRSMGLAY</sequence>
<protein>
    <recommendedName>
        <fullName evidence="2">Photosystem I iron-sulfur center</fullName>
        <ecNumber evidence="2">1.97.1.12</ecNumber>
    </recommendedName>
    <alternativeName>
        <fullName evidence="2">9 kDa polypeptide</fullName>
    </alternativeName>
    <alternativeName>
        <fullName evidence="2">PSI-C</fullName>
    </alternativeName>
    <alternativeName>
        <fullName evidence="2">Photosystem I subunit VII</fullName>
    </alternativeName>
    <alternativeName>
        <fullName evidence="2">PsaC</fullName>
    </alternativeName>
</protein>
<evidence type="ECO:0000250" key="1"/>
<evidence type="ECO:0000255" key="2">
    <source>
        <dbReference type="HAMAP-Rule" id="MF_01303"/>
    </source>
</evidence>
<organism>
    <name type="scientific">Nymphaea alba</name>
    <name type="common">White water-lily</name>
    <name type="synonym">Castalia alba</name>
    <dbReference type="NCBI Taxonomy" id="34301"/>
    <lineage>
        <taxon>Eukaryota</taxon>
        <taxon>Viridiplantae</taxon>
        <taxon>Streptophyta</taxon>
        <taxon>Embryophyta</taxon>
        <taxon>Tracheophyta</taxon>
        <taxon>Spermatophyta</taxon>
        <taxon>Magnoliopsida</taxon>
        <taxon>Nymphaeales</taxon>
        <taxon>Nymphaeaceae</taxon>
        <taxon>Nymphaea</taxon>
    </lineage>
</organism>
<geneLocation type="chloroplast"/>
<proteinExistence type="inferred from homology"/>
<keyword id="KW-0004">4Fe-4S</keyword>
<keyword id="KW-0150">Chloroplast</keyword>
<keyword id="KW-0249">Electron transport</keyword>
<keyword id="KW-0408">Iron</keyword>
<keyword id="KW-0411">Iron-sulfur</keyword>
<keyword id="KW-0472">Membrane</keyword>
<keyword id="KW-0479">Metal-binding</keyword>
<keyword id="KW-0560">Oxidoreductase</keyword>
<keyword id="KW-0602">Photosynthesis</keyword>
<keyword id="KW-0603">Photosystem I</keyword>
<keyword id="KW-0934">Plastid</keyword>
<keyword id="KW-0677">Repeat</keyword>
<keyword id="KW-0793">Thylakoid</keyword>
<keyword id="KW-0813">Transport</keyword>
<name>PSAC_NYMAL</name>
<reference key="1">
    <citation type="journal article" date="2004" name="Mol. Biol. Evol.">
        <title>The chloroplast genome of Nymphaea alba: whole-genome analyses and the problem of identifying the most basal angiosperm.</title>
        <authorList>
            <person name="Goremykin V.V."/>
            <person name="Hirsch-Ernst K.I."/>
            <person name="Woelfl S."/>
            <person name="Hellwig F.H."/>
        </authorList>
    </citation>
    <scope>NUCLEOTIDE SEQUENCE [LARGE SCALE GENOMIC DNA]</scope>
</reference>